<comment type="function">
    <text evidence="1">Catalyzes the attachment of serine to tRNA(Ser). Is also able to aminoacylate tRNA(Sec) with serine, to form the misacylated tRNA L-seryl-tRNA(Sec), which will be further converted into selenocysteinyl-tRNA(Sec).</text>
</comment>
<comment type="catalytic activity">
    <reaction evidence="1">
        <text>tRNA(Ser) + L-serine + ATP = L-seryl-tRNA(Ser) + AMP + diphosphate + H(+)</text>
        <dbReference type="Rhea" id="RHEA:12292"/>
        <dbReference type="Rhea" id="RHEA-COMP:9669"/>
        <dbReference type="Rhea" id="RHEA-COMP:9703"/>
        <dbReference type="ChEBI" id="CHEBI:15378"/>
        <dbReference type="ChEBI" id="CHEBI:30616"/>
        <dbReference type="ChEBI" id="CHEBI:33019"/>
        <dbReference type="ChEBI" id="CHEBI:33384"/>
        <dbReference type="ChEBI" id="CHEBI:78442"/>
        <dbReference type="ChEBI" id="CHEBI:78533"/>
        <dbReference type="ChEBI" id="CHEBI:456215"/>
        <dbReference type="EC" id="6.1.1.11"/>
    </reaction>
</comment>
<comment type="catalytic activity">
    <reaction evidence="1">
        <text>tRNA(Sec) + L-serine + ATP = L-seryl-tRNA(Sec) + AMP + diphosphate + H(+)</text>
        <dbReference type="Rhea" id="RHEA:42580"/>
        <dbReference type="Rhea" id="RHEA-COMP:9742"/>
        <dbReference type="Rhea" id="RHEA-COMP:10128"/>
        <dbReference type="ChEBI" id="CHEBI:15378"/>
        <dbReference type="ChEBI" id="CHEBI:30616"/>
        <dbReference type="ChEBI" id="CHEBI:33019"/>
        <dbReference type="ChEBI" id="CHEBI:33384"/>
        <dbReference type="ChEBI" id="CHEBI:78442"/>
        <dbReference type="ChEBI" id="CHEBI:78533"/>
        <dbReference type="ChEBI" id="CHEBI:456215"/>
        <dbReference type="EC" id="6.1.1.11"/>
    </reaction>
</comment>
<comment type="pathway">
    <text evidence="1">Aminoacyl-tRNA biosynthesis; selenocysteinyl-tRNA(Sec) biosynthesis; L-seryl-tRNA(Sec) from L-serine and tRNA(Sec): step 1/1.</text>
</comment>
<comment type="subunit">
    <text evidence="1">Homodimer. The tRNA molecule binds across the dimer.</text>
</comment>
<comment type="subcellular location">
    <subcellularLocation>
        <location evidence="1">Cytoplasm</location>
    </subcellularLocation>
</comment>
<comment type="domain">
    <text evidence="1">Consists of two distinct domains, a catalytic core and a N-terminal extension that is involved in tRNA binding.</text>
</comment>
<comment type="similarity">
    <text evidence="1">Belongs to the class-II aminoacyl-tRNA synthetase family. Type-1 seryl-tRNA synthetase subfamily.</text>
</comment>
<accession>Q1JFE4</accession>
<organism>
    <name type="scientific">Streptococcus pyogenes serotype M2 (strain MGAS10270)</name>
    <dbReference type="NCBI Taxonomy" id="370552"/>
    <lineage>
        <taxon>Bacteria</taxon>
        <taxon>Bacillati</taxon>
        <taxon>Bacillota</taxon>
        <taxon>Bacilli</taxon>
        <taxon>Lactobacillales</taxon>
        <taxon>Streptococcaceae</taxon>
        <taxon>Streptococcus</taxon>
    </lineage>
</organism>
<name>SYS_STRPD</name>
<reference key="1">
    <citation type="journal article" date="2006" name="Proc. Natl. Acad. Sci. U.S.A.">
        <title>Molecular genetic anatomy of inter- and intraserotype variation in the human bacterial pathogen group A Streptococcus.</title>
        <authorList>
            <person name="Beres S.B."/>
            <person name="Richter E.W."/>
            <person name="Nagiec M.J."/>
            <person name="Sumby P."/>
            <person name="Porcella S.F."/>
            <person name="DeLeo F.R."/>
            <person name="Musser J.M."/>
        </authorList>
    </citation>
    <scope>NUCLEOTIDE SEQUENCE [LARGE SCALE GENOMIC DNA]</scope>
    <source>
        <strain>MGAS10270</strain>
    </source>
</reference>
<gene>
    <name evidence="1" type="primary">serS</name>
    <name type="ordered locus">MGAS10270_Spy1550</name>
</gene>
<feature type="chain" id="PRO_1000019839" description="Serine--tRNA ligase">
    <location>
        <begin position="1"/>
        <end position="425"/>
    </location>
</feature>
<feature type="binding site" evidence="1">
    <location>
        <begin position="230"/>
        <end position="232"/>
    </location>
    <ligand>
        <name>L-serine</name>
        <dbReference type="ChEBI" id="CHEBI:33384"/>
    </ligand>
</feature>
<feature type="binding site" evidence="1">
    <location>
        <begin position="261"/>
        <end position="263"/>
    </location>
    <ligand>
        <name>ATP</name>
        <dbReference type="ChEBI" id="CHEBI:30616"/>
    </ligand>
</feature>
<feature type="binding site" evidence="1">
    <location>
        <position position="284"/>
    </location>
    <ligand>
        <name>L-serine</name>
        <dbReference type="ChEBI" id="CHEBI:33384"/>
    </ligand>
</feature>
<feature type="binding site" evidence="1">
    <location>
        <begin position="348"/>
        <end position="351"/>
    </location>
    <ligand>
        <name>ATP</name>
        <dbReference type="ChEBI" id="CHEBI:30616"/>
    </ligand>
</feature>
<feature type="binding site" evidence="1">
    <location>
        <position position="384"/>
    </location>
    <ligand>
        <name>L-serine</name>
        <dbReference type="ChEBI" id="CHEBI:33384"/>
    </ligand>
</feature>
<protein>
    <recommendedName>
        <fullName evidence="1">Serine--tRNA ligase</fullName>
        <ecNumber evidence="1">6.1.1.11</ecNumber>
    </recommendedName>
    <alternativeName>
        <fullName evidence="1">Seryl-tRNA synthetase</fullName>
        <shortName evidence="1">SerRS</shortName>
    </alternativeName>
    <alternativeName>
        <fullName evidence="1">Seryl-tRNA(Ser/Sec) synthetase</fullName>
    </alternativeName>
</protein>
<proteinExistence type="inferred from homology"/>
<evidence type="ECO:0000255" key="1">
    <source>
        <dbReference type="HAMAP-Rule" id="MF_00176"/>
    </source>
</evidence>
<sequence>MLDLKRIRTDFDTVAAKLKNRGVSEDTLTHLKELDEKRRTLLVQSEELKAERNIASAAIAQAKRQKEGATQQIADMQKVSADIKTIDNQLVAIDQQVADIITVLPNTPHDSVPVGADEEDNVEIRRWGTPRDFDFEVKAHWNLGEDLDILDWERGAKVTGARFLFYKNLGARLERALYNFMLDEHIKEGYQEIITPYMVNHDSMFGTGQYPKFKEDTFELADTNFVLIPTAEVPLTNYYRGEILDGKELPIYFTAMSPSFRSEAGSAGRDTRGLIRLHQFHKVEMVKFAKPEESYQELEKMTANAENILQKLGLPYRVISLCTGDMGFSAAKTYDLEVWIPAQNTYREISSCSNTEDFQARRAQIRYRDEADGKVKLLHTLNGSGLAVGRTVAAILENYQNEDGSVTIPEVLRPYMGGETVISPK</sequence>
<keyword id="KW-0030">Aminoacyl-tRNA synthetase</keyword>
<keyword id="KW-0067">ATP-binding</keyword>
<keyword id="KW-0963">Cytoplasm</keyword>
<keyword id="KW-0436">Ligase</keyword>
<keyword id="KW-0547">Nucleotide-binding</keyword>
<keyword id="KW-0648">Protein biosynthesis</keyword>
<dbReference type="EC" id="6.1.1.11" evidence="1"/>
<dbReference type="EMBL" id="CP000260">
    <property type="protein sequence ID" value="ABF34615.1"/>
    <property type="molecule type" value="Genomic_DNA"/>
</dbReference>
<dbReference type="SMR" id="Q1JFE4"/>
<dbReference type="KEGG" id="sph:MGAS10270_Spy1550"/>
<dbReference type="HOGENOM" id="CLU_023797_1_1_9"/>
<dbReference type="UniPathway" id="UPA00906">
    <property type="reaction ID" value="UER00895"/>
</dbReference>
<dbReference type="Proteomes" id="UP000002436">
    <property type="component" value="Chromosome"/>
</dbReference>
<dbReference type="GO" id="GO:0005737">
    <property type="term" value="C:cytoplasm"/>
    <property type="evidence" value="ECO:0007669"/>
    <property type="project" value="UniProtKB-SubCell"/>
</dbReference>
<dbReference type="GO" id="GO:0005524">
    <property type="term" value="F:ATP binding"/>
    <property type="evidence" value="ECO:0007669"/>
    <property type="project" value="UniProtKB-UniRule"/>
</dbReference>
<dbReference type="GO" id="GO:0140096">
    <property type="term" value="F:catalytic activity, acting on a protein"/>
    <property type="evidence" value="ECO:0007669"/>
    <property type="project" value="UniProtKB-ARBA"/>
</dbReference>
<dbReference type="GO" id="GO:0004828">
    <property type="term" value="F:serine-tRNA ligase activity"/>
    <property type="evidence" value="ECO:0007669"/>
    <property type="project" value="UniProtKB-UniRule"/>
</dbReference>
<dbReference type="GO" id="GO:0016740">
    <property type="term" value="F:transferase activity"/>
    <property type="evidence" value="ECO:0007669"/>
    <property type="project" value="UniProtKB-ARBA"/>
</dbReference>
<dbReference type="GO" id="GO:0016260">
    <property type="term" value="P:selenocysteine biosynthetic process"/>
    <property type="evidence" value="ECO:0007669"/>
    <property type="project" value="UniProtKB-UniRule"/>
</dbReference>
<dbReference type="GO" id="GO:0006434">
    <property type="term" value="P:seryl-tRNA aminoacylation"/>
    <property type="evidence" value="ECO:0007669"/>
    <property type="project" value="UniProtKB-UniRule"/>
</dbReference>
<dbReference type="CDD" id="cd00770">
    <property type="entry name" value="SerRS_core"/>
    <property type="match status" value="1"/>
</dbReference>
<dbReference type="Gene3D" id="3.30.930.10">
    <property type="entry name" value="Bira Bifunctional Protein, Domain 2"/>
    <property type="match status" value="1"/>
</dbReference>
<dbReference type="Gene3D" id="1.10.287.40">
    <property type="entry name" value="Serine-tRNA synthetase, tRNA binding domain"/>
    <property type="match status" value="1"/>
</dbReference>
<dbReference type="HAMAP" id="MF_00176">
    <property type="entry name" value="Ser_tRNA_synth_type1"/>
    <property type="match status" value="1"/>
</dbReference>
<dbReference type="InterPro" id="IPR002314">
    <property type="entry name" value="aa-tRNA-synt_IIb"/>
</dbReference>
<dbReference type="InterPro" id="IPR006195">
    <property type="entry name" value="aa-tRNA-synth_II"/>
</dbReference>
<dbReference type="InterPro" id="IPR045864">
    <property type="entry name" value="aa-tRNA-synth_II/BPL/LPL"/>
</dbReference>
<dbReference type="InterPro" id="IPR002317">
    <property type="entry name" value="Ser-tRNA-ligase_type_1"/>
</dbReference>
<dbReference type="InterPro" id="IPR015866">
    <property type="entry name" value="Ser-tRNA-synth_1_N"/>
</dbReference>
<dbReference type="InterPro" id="IPR042103">
    <property type="entry name" value="SerRS_1_N_sf"/>
</dbReference>
<dbReference type="InterPro" id="IPR033729">
    <property type="entry name" value="SerRS_core"/>
</dbReference>
<dbReference type="InterPro" id="IPR010978">
    <property type="entry name" value="tRNA-bd_arm"/>
</dbReference>
<dbReference type="NCBIfam" id="TIGR00414">
    <property type="entry name" value="serS"/>
    <property type="match status" value="1"/>
</dbReference>
<dbReference type="PANTHER" id="PTHR43697:SF1">
    <property type="entry name" value="SERINE--TRNA LIGASE"/>
    <property type="match status" value="1"/>
</dbReference>
<dbReference type="PANTHER" id="PTHR43697">
    <property type="entry name" value="SERYL-TRNA SYNTHETASE"/>
    <property type="match status" value="1"/>
</dbReference>
<dbReference type="Pfam" id="PF02403">
    <property type="entry name" value="Seryl_tRNA_N"/>
    <property type="match status" value="1"/>
</dbReference>
<dbReference type="Pfam" id="PF00587">
    <property type="entry name" value="tRNA-synt_2b"/>
    <property type="match status" value="1"/>
</dbReference>
<dbReference type="PIRSF" id="PIRSF001529">
    <property type="entry name" value="Ser-tRNA-synth_IIa"/>
    <property type="match status" value="1"/>
</dbReference>
<dbReference type="PRINTS" id="PR00981">
    <property type="entry name" value="TRNASYNTHSER"/>
</dbReference>
<dbReference type="SUPFAM" id="SSF55681">
    <property type="entry name" value="Class II aaRS and biotin synthetases"/>
    <property type="match status" value="1"/>
</dbReference>
<dbReference type="SUPFAM" id="SSF46589">
    <property type="entry name" value="tRNA-binding arm"/>
    <property type="match status" value="1"/>
</dbReference>
<dbReference type="PROSITE" id="PS50862">
    <property type="entry name" value="AA_TRNA_LIGASE_II"/>
    <property type="match status" value="1"/>
</dbReference>